<sequence>MPKKSVRHIKIREIISNEQIETQDELVKRLNEYDLNVTQATVSRDIKELQLIKVPAPTGQYVYSLPNDRRYHPLEKLGRYLMDSFVNIEGTGNLLVLKTLPGNAQSIGAILDQIDWDEVLGTICGDDTCLLICRDEEASEEIKTRIFNLL</sequence>
<keyword id="KW-0028">Amino-acid biosynthesis</keyword>
<keyword id="KW-0055">Arginine biosynthesis</keyword>
<keyword id="KW-0963">Cytoplasm</keyword>
<keyword id="KW-0238">DNA-binding</keyword>
<keyword id="KW-1185">Reference proteome</keyword>
<keyword id="KW-0678">Repressor</keyword>
<keyword id="KW-0804">Transcription</keyword>
<keyword id="KW-0805">Transcription regulation</keyword>
<dbReference type="EMBL" id="CP000029">
    <property type="protein sequence ID" value="AAW54447.1"/>
    <property type="molecule type" value="Genomic_DNA"/>
</dbReference>
<dbReference type="RefSeq" id="WP_002456185.1">
    <property type="nucleotide sequence ID" value="NC_002976.3"/>
</dbReference>
<dbReference type="SMR" id="Q5HP32"/>
<dbReference type="STRING" id="176279.SERP1081"/>
<dbReference type="GeneID" id="50018681"/>
<dbReference type="KEGG" id="ser:SERP1081"/>
<dbReference type="eggNOG" id="COG1438">
    <property type="taxonomic scope" value="Bacteria"/>
</dbReference>
<dbReference type="HOGENOM" id="CLU_097103_3_0_9"/>
<dbReference type="UniPathway" id="UPA00068"/>
<dbReference type="Proteomes" id="UP000000531">
    <property type="component" value="Chromosome"/>
</dbReference>
<dbReference type="GO" id="GO:0005737">
    <property type="term" value="C:cytoplasm"/>
    <property type="evidence" value="ECO:0007669"/>
    <property type="project" value="UniProtKB-SubCell"/>
</dbReference>
<dbReference type="GO" id="GO:0034618">
    <property type="term" value="F:arginine binding"/>
    <property type="evidence" value="ECO:0007669"/>
    <property type="project" value="InterPro"/>
</dbReference>
<dbReference type="GO" id="GO:0003677">
    <property type="term" value="F:DNA binding"/>
    <property type="evidence" value="ECO:0007669"/>
    <property type="project" value="UniProtKB-KW"/>
</dbReference>
<dbReference type="GO" id="GO:0003700">
    <property type="term" value="F:DNA-binding transcription factor activity"/>
    <property type="evidence" value="ECO:0007669"/>
    <property type="project" value="UniProtKB-UniRule"/>
</dbReference>
<dbReference type="GO" id="GO:0006526">
    <property type="term" value="P:L-arginine biosynthetic process"/>
    <property type="evidence" value="ECO:0007669"/>
    <property type="project" value="UniProtKB-UniPathway"/>
</dbReference>
<dbReference type="GO" id="GO:0051259">
    <property type="term" value="P:protein complex oligomerization"/>
    <property type="evidence" value="ECO:0007669"/>
    <property type="project" value="InterPro"/>
</dbReference>
<dbReference type="GO" id="GO:1900079">
    <property type="term" value="P:regulation of arginine biosynthetic process"/>
    <property type="evidence" value="ECO:0007669"/>
    <property type="project" value="UniProtKB-UniRule"/>
</dbReference>
<dbReference type="Gene3D" id="3.30.1360.40">
    <property type="match status" value="1"/>
</dbReference>
<dbReference type="Gene3D" id="1.10.10.10">
    <property type="entry name" value="Winged helix-like DNA-binding domain superfamily/Winged helix DNA-binding domain"/>
    <property type="match status" value="1"/>
</dbReference>
<dbReference type="HAMAP" id="MF_00173">
    <property type="entry name" value="Arg_repressor"/>
    <property type="match status" value="1"/>
</dbReference>
<dbReference type="InterPro" id="IPR001669">
    <property type="entry name" value="Arg_repress"/>
</dbReference>
<dbReference type="InterPro" id="IPR020899">
    <property type="entry name" value="Arg_repress_C"/>
</dbReference>
<dbReference type="InterPro" id="IPR036251">
    <property type="entry name" value="Arg_repress_C_sf"/>
</dbReference>
<dbReference type="InterPro" id="IPR020900">
    <property type="entry name" value="Arg_repress_DNA-bd"/>
</dbReference>
<dbReference type="InterPro" id="IPR036388">
    <property type="entry name" value="WH-like_DNA-bd_sf"/>
</dbReference>
<dbReference type="InterPro" id="IPR036390">
    <property type="entry name" value="WH_DNA-bd_sf"/>
</dbReference>
<dbReference type="NCBIfam" id="TIGR01529">
    <property type="entry name" value="argR_whole"/>
    <property type="match status" value="1"/>
</dbReference>
<dbReference type="NCBIfam" id="NF003281">
    <property type="entry name" value="PRK04280.1"/>
    <property type="match status" value="1"/>
</dbReference>
<dbReference type="PANTHER" id="PTHR34471">
    <property type="entry name" value="ARGININE REPRESSOR"/>
    <property type="match status" value="1"/>
</dbReference>
<dbReference type="PANTHER" id="PTHR34471:SF1">
    <property type="entry name" value="ARGININE REPRESSOR"/>
    <property type="match status" value="1"/>
</dbReference>
<dbReference type="Pfam" id="PF01316">
    <property type="entry name" value="Arg_repressor"/>
    <property type="match status" value="1"/>
</dbReference>
<dbReference type="Pfam" id="PF02863">
    <property type="entry name" value="Arg_repressor_C"/>
    <property type="match status" value="1"/>
</dbReference>
<dbReference type="PRINTS" id="PR01467">
    <property type="entry name" value="ARGREPRESSOR"/>
</dbReference>
<dbReference type="SUPFAM" id="SSF55252">
    <property type="entry name" value="C-terminal domain of arginine repressor"/>
    <property type="match status" value="1"/>
</dbReference>
<dbReference type="SUPFAM" id="SSF46785">
    <property type="entry name" value="Winged helix' DNA-binding domain"/>
    <property type="match status" value="1"/>
</dbReference>
<protein>
    <recommendedName>
        <fullName evidence="1">Arginine repressor</fullName>
    </recommendedName>
</protein>
<feature type="chain" id="PRO_0000205121" description="Arginine repressor">
    <location>
        <begin position="1"/>
        <end position="150"/>
    </location>
</feature>
<accession>Q5HP32</accession>
<proteinExistence type="inferred from homology"/>
<organism>
    <name type="scientific">Staphylococcus epidermidis (strain ATCC 35984 / DSM 28319 / BCRC 17069 / CCUG 31568 / BM 3577 / RP62A)</name>
    <dbReference type="NCBI Taxonomy" id="176279"/>
    <lineage>
        <taxon>Bacteria</taxon>
        <taxon>Bacillati</taxon>
        <taxon>Bacillota</taxon>
        <taxon>Bacilli</taxon>
        <taxon>Bacillales</taxon>
        <taxon>Staphylococcaceae</taxon>
        <taxon>Staphylococcus</taxon>
    </lineage>
</organism>
<gene>
    <name evidence="1" type="primary">argR</name>
    <name type="ordered locus">SERP1081</name>
</gene>
<comment type="function">
    <text evidence="1">Regulates arginine biosynthesis genes.</text>
</comment>
<comment type="pathway">
    <text>Amino-acid biosynthesis; L-arginine biosynthesis [regulation].</text>
</comment>
<comment type="subcellular location">
    <subcellularLocation>
        <location evidence="1">Cytoplasm</location>
    </subcellularLocation>
</comment>
<comment type="similarity">
    <text evidence="1">Belongs to the ArgR family.</text>
</comment>
<name>ARGR_STAEQ</name>
<reference key="1">
    <citation type="journal article" date="2005" name="J. Bacteriol.">
        <title>Insights on evolution of virulence and resistance from the complete genome analysis of an early methicillin-resistant Staphylococcus aureus strain and a biofilm-producing methicillin-resistant Staphylococcus epidermidis strain.</title>
        <authorList>
            <person name="Gill S.R."/>
            <person name="Fouts D.E."/>
            <person name="Archer G.L."/>
            <person name="Mongodin E.F."/>
            <person name="DeBoy R.T."/>
            <person name="Ravel J."/>
            <person name="Paulsen I.T."/>
            <person name="Kolonay J.F."/>
            <person name="Brinkac L.M."/>
            <person name="Beanan M.J."/>
            <person name="Dodson R.J."/>
            <person name="Daugherty S.C."/>
            <person name="Madupu R."/>
            <person name="Angiuoli S.V."/>
            <person name="Durkin A.S."/>
            <person name="Haft D.H."/>
            <person name="Vamathevan J.J."/>
            <person name="Khouri H."/>
            <person name="Utterback T.R."/>
            <person name="Lee C."/>
            <person name="Dimitrov G."/>
            <person name="Jiang L."/>
            <person name="Qin H."/>
            <person name="Weidman J."/>
            <person name="Tran K."/>
            <person name="Kang K.H."/>
            <person name="Hance I.R."/>
            <person name="Nelson K.E."/>
            <person name="Fraser C.M."/>
        </authorList>
    </citation>
    <scope>NUCLEOTIDE SEQUENCE [LARGE SCALE GENOMIC DNA]</scope>
    <source>
        <strain>ATCC 35984 / DSM 28319 / BCRC 17069 / CCUG 31568 / BM 3577 / RP62A</strain>
    </source>
</reference>
<evidence type="ECO:0000255" key="1">
    <source>
        <dbReference type="HAMAP-Rule" id="MF_00173"/>
    </source>
</evidence>